<keyword id="KW-0963">Cytoplasm</keyword>
<keyword id="KW-0378">Hydrolase</keyword>
<keyword id="KW-0645">Protease</keyword>
<keyword id="KW-1185">Reference proteome</keyword>
<keyword id="KW-0720">Serine protease</keyword>
<accession>Q2JIP1</accession>
<evidence type="ECO:0000255" key="1">
    <source>
        <dbReference type="HAMAP-Rule" id="MF_00444"/>
    </source>
</evidence>
<protein>
    <recommendedName>
        <fullName evidence="1">ATP-dependent Clp protease proteolytic subunit 2</fullName>
        <ecNumber evidence="1">3.4.21.92</ecNumber>
    </recommendedName>
    <alternativeName>
        <fullName evidence="1">Endopeptidase Clp 2</fullName>
    </alternativeName>
</protein>
<comment type="function">
    <text evidence="1">Cleaves peptides in various proteins in a process that requires ATP hydrolysis. Has a chymotrypsin-like activity. Plays a major role in the degradation of misfolded proteins.</text>
</comment>
<comment type="catalytic activity">
    <reaction evidence="1">
        <text>Hydrolysis of proteins to small peptides in the presence of ATP and magnesium. alpha-casein is the usual test substrate. In the absence of ATP, only oligopeptides shorter than five residues are hydrolyzed (such as succinyl-Leu-Tyr-|-NHMec, and Leu-Tyr-Leu-|-Tyr-Trp, in which cleavage of the -Tyr-|-Leu- and -Tyr-|-Trp bonds also occurs).</text>
        <dbReference type="EC" id="3.4.21.92"/>
    </reaction>
</comment>
<comment type="subunit">
    <text evidence="1">Fourteen ClpP subunits assemble into 2 heptameric rings which stack back to back to give a disk-like structure with a central cavity, resembling the structure of eukaryotic proteasomes.</text>
</comment>
<comment type="subcellular location">
    <subcellularLocation>
        <location evidence="1">Cytoplasm</location>
    </subcellularLocation>
</comment>
<comment type="similarity">
    <text evidence="1">Belongs to the peptidase S14 family.</text>
</comment>
<proteinExistence type="inferred from homology"/>
<organism>
    <name type="scientific">Synechococcus sp. (strain JA-2-3B'a(2-13))</name>
    <name type="common">Cyanobacteria bacterium Yellowstone B-Prime</name>
    <dbReference type="NCBI Taxonomy" id="321332"/>
    <lineage>
        <taxon>Bacteria</taxon>
        <taxon>Bacillati</taxon>
        <taxon>Cyanobacteriota</taxon>
        <taxon>Cyanophyceae</taxon>
        <taxon>Synechococcales</taxon>
        <taxon>Synechococcaceae</taxon>
        <taxon>Synechococcus</taxon>
    </lineage>
</organism>
<sequence length="200" mass="22074">MIPTVIEQSARGERAFDIYSRLLRDRIIFLGTQVDDDIANLIVAQMLYLESEDPEKDIYLYINSPGGSVYAGMAIYDTMQHIQPDVSTICIGLAASMGAFLLAGGTKGKRIALPHARIMIHQPLGGAQGPATDIEIQAKEILFIKNSLNSLLAYHTGQPLERIERDTDRDNFMTPEQAKEYGLIDQVISKRPQPTLAAVS</sequence>
<reference key="1">
    <citation type="journal article" date="2007" name="ISME J.">
        <title>Population level functional diversity in a microbial community revealed by comparative genomic and metagenomic analyses.</title>
        <authorList>
            <person name="Bhaya D."/>
            <person name="Grossman A.R."/>
            <person name="Steunou A.-S."/>
            <person name="Khuri N."/>
            <person name="Cohan F.M."/>
            <person name="Hamamura N."/>
            <person name="Melendrez M.C."/>
            <person name="Bateson M.M."/>
            <person name="Ward D.M."/>
            <person name="Heidelberg J.F."/>
        </authorList>
    </citation>
    <scope>NUCLEOTIDE SEQUENCE [LARGE SCALE GENOMIC DNA]</scope>
    <source>
        <strain>JA-2-3B'a(2-13)</strain>
    </source>
</reference>
<dbReference type="EC" id="3.4.21.92" evidence="1"/>
<dbReference type="EMBL" id="CP000240">
    <property type="protein sequence ID" value="ABD03513.1"/>
    <property type="molecule type" value="Genomic_DNA"/>
</dbReference>
<dbReference type="SMR" id="Q2JIP1"/>
<dbReference type="STRING" id="321332.CYB_2581"/>
<dbReference type="MEROPS" id="S14.001"/>
<dbReference type="KEGG" id="cyb:CYB_2581"/>
<dbReference type="eggNOG" id="COG0740">
    <property type="taxonomic scope" value="Bacteria"/>
</dbReference>
<dbReference type="HOGENOM" id="CLU_058707_3_2_3"/>
<dbReference type="OrthoDB" id="571524at2"/>
<dbReference type="Proteomes" id="UP000001938">
    <property type="component" value="Chromosome"/>
</dbReference>
<dbReference type="GO" id="GO:0005737">
    <property type="term" value="C:cytoplasm"/>
    <property type="evidence" value="ECO:0007669"/>
    <property type="project" value="UniProtKB-SubCell"/>
</dbReference>
<dbReference type="GO" id="GO:0009368">
    <property type="term" value="C:endopeptidase Clp complex"/>
    <property type="evidence" value="ECO:0007669"/>
    <property type="project" value="TreeGrafter"/>
</dbReference>
<dbReference type="GO" id="GO:0004176">
    <property type="term" value="F:ATP-dependent peptidase activity"/>
    <property type="evidence" value="ECO:0007669"/>
    <property type="project" value="InterPro"/>
</dbReference>
<dbReference type="GO" id="GO:0051117">
    <property type="term" value="F:ATPase binding"/>
    <property type="evidence" value="ECO:0007669"/>
    <property type="project" value="TreeGrafter"/>
</dbReference>
<dbReference type="GO" id="GO:0004252">
    <property type="term" value="F:serine-type endopeptidase activity"/>
    <property type="evidence" value="ECO:0007669"/>
    <property type="project" value="UniProtKB-UniRule"/>
</dbReference>
<dbReference type="GO" id="GO:0006515">
    <property type="term" value="P:protein quality control for misfolded or incompletely synthesized proteins"/>
    <property type="evidence" value="ECO:0007669"/>
    <property type="project" value="TreeGrafter"/>
</dbReference>
<dbReference type="CDD" id="cd07017">
    <property type="entry name" value="S14_ClpP_2"/>
    <property type="match status" value="1"/>
</dbReference>
<dbReference type="FunFam" id="3.90.226.10:FF:000001">
    <property type="entry name" value="ATP-dependent Clp protease proteolytic subunit"/>
    <property type="match status" value="1"/>
</dbReference>
<dbReference type="Gene3D" id="3.90.226.10">
    <property type="entry name" value="2-enoyl-CoA Hydratase, Chain A, domain 1"/>
    <property type="match status" value="1"/>
</dbReference>
<dbReference type="HAMAP" id="MF_00444">
    <property type="entry name" value="ClpP"/>
    <property type="match status" value="1"/>
</dbReference>
<dbReference type="InterPro" id="IPR001907">
    <property type="entry name" value="ClpP"/>
</dbReference>
<dbReference type="InterPro" id="IPR029045">
    <property type="entry name" value="ClpP/crotonase-like_dom_sf"/>
</dbReference>
<dbReference type="InterPro" id="IPR023562">
    <property type="entry name" value="ClpP/TepA"/>
</dbReference>
<dbReference type="InterPro" id="IPR033135">
    <property type="entry name" value="ClpP_His_AS"/>
</dbReference>
<dbReference type="InterPro" id="IPR018215">
    <property type="entry name" value="ClpP_Ser_AS"/>
</dbReference>
<dbReference type="NCBIfam" id="TIGR00493">
    <property type="entry name" value="clpP"/>
    <property type="match status" value="1"/>
</dbReference>
<dbReference type="NCBIfam" id="NF001368">
    <property type="entry name" value="PRK00277.1"/>
    <property type="match status" value="1"/>
</dbReference>
<dbReference type="NCBIfam" id="NF009205">
    <property type="entry name" value="PRK12553.1"/>
    <property type="match status" value="1"/>
</dbReference>
<dbReference type="PANTHER" id="PTHR10381">
    <property type="entry name" value="ATP-DEPENDENT CLP PROTEASE PROTEOLYTIC SUBUNIT"/>
    <property type="match status" value="1"/>
</dbReference>
<dbReference type="PANTHER" id="PTHR10381:SF70">
    <property type="entry name" value="ATP-DEPENDENT CLP PROTEASE PROTEOLYTIC SUBUNIT"/>
    <property type="match status" value="1"/>
</dbReference>
<dbReference type="Pfam" id="PF00574">
    <property type="entry name" value="CLP_protease"/>
    <property type="match status" value="1"/>
</dbReference>
<dbReference type="PRINTS" id="PR00127">
    <property type="entry name" value="CLPPROTEASEP"/>
</dbReference>
<dbReference type="SUPFAM" id="SSF52096">
    <property type="entry name" value="ClpP/crotonase"/>
    <property type="match status" value="1"/>
</dbReference>
<dbReference type="PROSITE" id="PS00382">
    <property type="entry name" value="CLP_PROTEASE_HIS"/>
    <property type="match status" value="1"/>
</dbReference>
<dbReference type="PROSITE" id="PS00381">
    <property type="entry name" value="CLP_PROTEASE_SER"/>
    <property type="match status" value="1"/>
</dbReference>
<gene>
    <name evidence="1" type="primary">clpP2</name>
    <name type="ordered locus">CYB_2581</name>
</gene>
<feature type="chain" id="PRO_0000236413" description="ATP-dependent Clp protease proteolytic subunit 2">
    <location>
        <begin position="1"/>
        <end position="200"/>
    </location>
</feature>
<feature type="active site" description="Nucleophile" evidence="1">
    <location>
        <position position="96"/>
    </location>
</feature>
<feature type="active site" evidence="1">
    <location>
        <position position="121"/>
    </location>
</feature>
<name>CLPP2_SYNJB</name>